<protein>
    <recommendedName>
        <fullName evidence="2">D-alanine--D-alanine ligase</fullName>
        <ecNumber evidence="2">6.3.2.4</ecNumber>
    </recommendedName>
    <alternativeName>
        <fullName evidence="2">D-Ala-D-Ala ligase</fullName>
    </alternativeName>
    <alternativeName>
        <fullName evidence="2">D-alanylalanine synthetase</fullName>
    </alternativeName>
</protein>
<dbReference type="EC" id="6.3.2.4" evidence="2"/>
<dbReference type="EMBL" id="AL591688">
    <property type="protein sequence ID" value="CAC46750.1"/>
    <property type="molecule type" value="Genomic_DNA"/>
</dbReference>
<dbReference type="RefSeq" id="NP_386277.1">
    <property type="nucleotide sequence ID" value="NC_003047.1"/>
</dbReference>
<dbReference type="RefSeq" id="WP_010969744.1">
    <property type="nucleotide sequence ID" value="NC_003047.1"/>
</dbReference>
<dbReference type="SMR" id="Q92NM4"/>
<dbReference type="EnsemblBacteria" id="CAC46750">
    <property type="protein sequence ID" value="CAC46750"/>
    <property type="gene ID" value="SMc01871"/>
</dbReference>
<dbReference type="KEGG" id="sme:SMc01871"/>
<dbReference type="PATRIC" id="fig|266834.11.peg.3637"/>
<dbReference type="eggNOG" id="COG1181">
    <property type="taxonomic scope" value="Bacteria"/>
</dbReference>
<dbReference type="HOGENOM" id="CLU_039268_1_1_5"/>
<dbReference type="OrthoDB" id="9813261at2"/>
<dbReference type="UniPathway" id="UPA00219"/>
<dbReference type="Proteomes" id="UP000001976">
    <property type="component" value="Chromosome"/>
</dbReference>
<dbReference type="GO" id="GO:0005737">
    <property type="term" value="C:cytoplasm"/>
    <property type="evidence" value="ECO:0007669"/>
    <property type="project" value="UniProtKB-SubCell"/>
</dbReference>
<dbReference type="GO" id="GO:0005524">
    <property type="term" value="F:ATP binding"/>
    <property type="evidence" value="ECO:0007669"/>
    <property type="project" value="UniProtKB-KW"/>
</dbReference>
<dbReference type="GO" id="GO:0008716">
    <property type="term" value="F:D-alanine-D-alanine ligase activity"/>
    <property type="evidence" value="ECO:0007669"/>
    <property type="project" value="UniProtKB-UniRule"/>
</dbReference>
<dbReference type="GO" id="GO:0046872">
    <property type="term" value="F:metal ion binding"/>
    <property type="evidence" value="ECO:0007669"/>
    <property type="project" value="UniProtKB-KW"/>
</dbReference>
<dbReference type="GO" id="GO:0071555">
    <property type="term" value="P:cell wall organization"/>
    <property type="evidence" value="ECO:0007669"/>
    <property type="project" value="UniProtKB-KW"/>
</dbReference>
<dbReference type="GO" id="GO:0009252">
    <property type="term" value="P:peptidoglycan biosynthetic process"/>
    <property type="evidence" value="ECO:0007669"/>
    <property type="project" value="UniProtKB-UniRule"/>
</dbReference>
<dbReference type="GO" id="GO:0008360">
    <property type="term" value="P:regulation of cell shape"/>
    <property type="evidence" value="ECO:0007669"/>
    <property type="project" value="UniProtKB-KW"/>
</dbReference>
<dbReference type="Gene3D" id="3.40.50.20">
    <property type="match status" value="1"/>
</dbReference>
<dbReference type="Gene3D" id="3.30.1490.20">
    <property type="entry name" value="ATP-grasp fold, A domain"/>
    <property type="match status" value="1"/>
</dbReference>
<dbReference type="Gene3D" id="3.30.470.20">
    <property type="entry name" value="ATP-grasp fold, B domain"/>
    <property type="match status" value="1"/>
</dbReference>
<dbReference type="HAMAP" id="MF_00047">
    <property type="entry name" value="Dala_Dala_lig"/>
    <property type="match status" value="1"/>
</dbReference>
<dbReference type="InterPro" id="IPR011761">
    <property type="entry name" value="ATP-grasp"/>
</dbReference>
<dbReference type="InterPro" id="IPR013815">
    <property type="entry name" value="ATP_grasp_subdomain_1"/>
</dbReference>
<dbReference type="InterPro" id="IPR000291">
    <property type="entry name" value="D-Ala_lig_Van_CS"/>
</dbReference>
<dbReference type="InterPro" id="IPR005905">
    <property type="entry name" value="D_ala_D_ala"/>
</dbReference>
<dbReference type="InterPro" id="IPR011095">
    <property type="entry name" value="Dala_Dala_lig_C"/>
</dbReference>
<dbReference type="InterPro" id="IPR011127">
    <property type="entry name" value="Dala_Dala_lig_N"/>
</dbReference>
<dbReference type="InterPro" id="IPR016185">
    <property type="entry name" value="PreATP-grasp_dom_sf"/>
</dbReference>
<dbReference type="NCBIfam" id="TIGR01205">
    <property type="entry name" value="D_ala_D_alaTIGR"/>
    <property type="match status" value="1"/>
</dbReference>
<dbReference type="NCBIfam" id="NF002378">
    <property type="entry name" value="PRK01372.1"/>
    <property type="match status" value="1"/>
</dbReference>
<dbReference type="PANTHER" id="PTHR23132">
    <property type="entry name" value="D-ALANINE--D-ALANINE LIGASE"/>
    <property type="match status" value="1"/>
</dbReference>
<dbReference type="PANTHER" id="PTHR23132:SF23">
    <property type="entry name" value="D-ALANINE--D-ALANINE LIGASE B"/>
    <property type="match status" value="1"/>
</dbReference>
<dbReference type="Pfam" id="PF07478">
    <property type="entry name" value="Dala_Dala_lig_C"/>
    <property type="match status" value="1"/>
</dbReference>
<dbReference type="Pfam" id="PF01820">
    <property type="entry name" value="Dala_Dala_lig_N"/>
    <property type="match status" value="1"/>
</dbReference>
<dbReference type="PIRSF" id="PIRSF039102">
    <property type="entry name" value="Ddl/VanB"/>
    <property type="match status" value="1"/>
</dbReference>
<dbReference type="SUPFAM" id="SSF56059">
    <property type="entry name" value="Glutathione synthetase ATP-binding domain-like"/>
    <property type="match status" value="1"/>
</dbReference>
<dbReference type="SUPFAM" id="SSF52440">
    <property type="entry name" value="PreATP-grasp domain"/>
    <property type="match status" value="1"/>
</dbReference>
<dbReference type="PROSITE" id="PS50975">
    <property type="entry name" value="ATP_GRASP"/>
    <property type="match status" value="1"/>
</dbReference>
<dbReference type="PROSITE" id="PS00843">
    <property type="entry name" value="DALA_DALA_LIGASE_1"/>
    <property type="match status" value="1"/>
</dbReference>
<dbReference type="PROSITE" id="PS00844">
    <property type="entry name" value="DALA_DALA_LIGASE_2"/>
    <property type="match status" value="1"/>
</dbReference>
<comment type="function">
    <text evidence="2">Cell wall formation.</text>
</comment>
<comment type="catalytic activity">
    <reaction evidence="2">
        <text>2 D-alanine + ATP = D-alanyl-D-alanine + ADP + phosphate + H(+)</text>
        <dbReference type="Rhea" id="RHEA:11224"/>
        <dbReference type="ChEBI" id="CHEBI:15378"/>
        <dbReference type="ChEBI" id="CHEBI:30616"/>
        <dbReference type="ChEBI" id="CHEBI:43474"/>
        <dbReference type="ChEBI" id="CHEBI:57416"/>
        <dbReference type="ChEBI" id="CHEBI:57822"/>
        <dbReference type="ChEBI" id="CHEBI:456216"/>
        <dbReference type="EC" id="6.3.2.4"/>
    </reaction>
</comment>
<comment type="cofactor">
    <cofactor evidence="1">
        <name>Mg(2+)</name>
        <dbReference type="ChEBI" id="CHEBI:18420"/>
    </cofactor>
    <cofactor evidence="1">
        <name>Mn(2+)</name>
        <dbReference type="ChEBI" id="CHEBI:29035"/>
    </cofactor>
    <text evidence="1">Binds 2 magnesium or manganese ions per subunit.</text>
</comment>
<comment type="pathway">
    <text evidence="2">Cell wall biogenesis; peptidoglycan biosynthesis.</text>
</comment>
<comment type="subcellular location">
    <subcellularLocation>
        <location evidence="2">Cytoplasm</location>
    </subcellularLocation>
</comment>
<comment type="similarity">
    <text evidence="2">Belongs to the D-alanine--D-alanine ligase family.</text>
</comment>
<feature type="chain" id="PRO_0000177864" description="D-alanine--D-alanine ligase">
    <location>
        <begin position="1"/>
        <end position="308"/>
    </location>
</feature>
<feature type="domain" description="ATP-grasp" evidence="2">
    <location>
        <begin position="102"/>
        <end position="302"/>
    </location>
</feature>
<feature type="binding site" evidence="2">
    <location>
        <begin position="128"/>
        <end position="183"/>
    </location>
    <ligand>
        <name>ATP</name>
        <dbReference type="ChEBI" id="CHEBI:30616"/>
    </ligand>
</feature>
<feature type="binding site" evidence="2">
    <location>
        <position position="252"/>
    </location>
    <ligand>
        <name>Mg(2+)</name>
        <dbReference type="ChEBI" id="CHEBI:18420"/>
        <label>1</label>
    </ligand>
</feature>
<feature type="binding site" evidence="2">
    <location>
        <position position="269"/>
    </location>
    <ligand>
        <name>Mg(2+)</name>
        <dbReference type="ChEBI" id="CHEBI:18420"/>
        <label>1</label>
    </ligand>
</feature>
<feature type="binding site" evidence="2">
    <location>
        <position position="269"/>
    </location>
    <ligand>
        <name>Mg(2+)</name>
        <dbReference type="ChEBI" id="CHEBI:18420"/>
        <label>2</label>
    </ligand>
</feature>
<feature type="binding site" evidence="2">
    <location>
        <position position="271"/>
    </location>
    <ligand>
        <name>Mg(2+)</name>
        <dbReference type="ChEBI" id="CHEBI:18420"/>
        <label>2</label>
    </ligand>
</feature>
<proteinExistence type="inferred from homology"/>
<evidence type="ECO:0000250" key="1"/>
<evidence type="ECO:0000255" key="2">
    <source>
        <dbReference type="HAMAP-Rule" id="MF_00047"/>
    </source>
</evidence>
<organism>
    <name type="scientific">Rhizobium meliloti (strain 1021)</name>
    <name type="common">Ensifer meliloti</name>
    <name type="synonym">Sinorhizobium meliloti</name>
    <dbReference type="NCBI Taxonomy" id="266834"/>
    <lineage>
        <taxon>Bacteria</taxon>
        <taxon>Pseudomonadati</taxon>
        <taxon>Pseudomonadota</taxon>
        <taxon>Alphaproteobacteria</taxon>
        <taxon>Hyphomicrobiales</taxon>
        <taxon>Rhizobiaceae</taxon>
        <taxon>Sinorhizobium/Ensifer group</taxon>
        <taxon>Sinorhizobium</taxon>
    </lineage>
</organism>
<accession>Q92NM4</accession>
<keyword id="KW-0067">ATP-binding</keyword>
<keyword id="KW-0133">Cell shape</keyword>
<keyword id="KW-0961">Cell wall biogenesis/degradation</keyword>
<keyword id="KW-0963">Cytoplasm</keyword>
<keyword id="KW-0436">Ligase</keyword>
<keyword id="KW-0460">Magnesium</keyword>
<keyword id="KW-0464">Manganese</keyword>
<keyword id="KW-0479">Metal-binding</keyword>
<keyword id="KW-0547">Nucleotide-binding</keyword>
<keyword id="KW-0573">Peptidoglycan synthesis</keyword>
<keyword id="KW-1185">Reference proteome</keyword>
<sequence length="308" mass="33615">MSSKHVAVLLGGFSSERPVSLSSGTACADALEAEGYRVTRVDVGRDVAAVLQELRPDVVFNALHGPFGEDGTIQGILEYLEIPYTHSGVLASALAMDKDQAKHVAKAAGIPVAEALVMDRRSFGNQHPMKPPYVVKPVREGSSFGVVIVKEDQSHPPQVITSSEWRYGDRVMVERYIAGREFTCGVMGDVALGVTEIIPQGHAFYDYDSKYVKGGSKHVIPAQISPNIYQKIQTLALKAHQAIGCRGVSRSDFRFDDRGDGEGELIWLEINTQPGMTPTSLVPEMAQHAGLQFGEFLRWMVEDASCLR</sequence>
<name>DDL_RHIME</name>
<gene>
    <name evidence="2" type="primary">ddl</name>
    <name type="synonym">ddlB</name>
    <name type="ordered locus">R02171</name>
    <name type="ORF">SMc01871</name>
</gene>
<reference key="1">
    <citation type="journal article" date="2001" name="Proc. Natl. Acad. Sci. U.S.A.">
        <title>Analysis of the chromosome sequence of the legume symbiont Sinorhizobium meliloti strain 1021.</title>
        <authorList>
            <person name="Capela D."/>
            <person name="Barloy-Hubler F."/>
            <person name="Gouzy J."/>
            <person name="Bothe G."/>
            <person name="Ampe F."/>
            <person name="Batut J."/>
            <person name="Boistard P."/>
            <person name="Becker A."/>
            <person name="Boutry M."/>
            <person name="Cadieu E."/>
            <person name="Dreano S."/>
            <person name="Gloux S."/>
            <person name="Godrie T."/>
            <person name="Goffeau A."/>
            <person name="Kahn D."/>
            <person name="Kiss E."/>
            <person name="Lelaure V."/>
            <person name="Masuy D."/>
            <person name="Pohl T."/>
            <person name="Portetelle D."/>
            <person name="Puehler A."/>
            <person name="Purnelle B."/>
            <person name="Ramsperger U."/>
            <person name="Renard C."/>
            <person name="Thebault P."/>
            <person name="Vandenbol M."/>
            <person name="Weidner S."/>
            <person name="Galibert F."/>
        </authorList>
    </citation>
    <scope>NUCLEOTIDE SEQUENCE [LARGE SCALE GENOMIC DNA]</scope>
    <source>
        <strain>1021</strain>
    </source>
</reference>
<reference key="2">
    <citation type="journal article" date="2001" name="Science">
        <title>The composite genome of the legume symbiont Sinorhizobium meliloti.</title>
        <authorList>
            <person name="Galibert F."/>
            <person name="Finan T.M."/>
            <person name="Long S.R."/>
            <person name="Puehler A."/>
            <person name="Abola P."/>
            <person name="Ampe F."/>
            <person name="Barloy-Hubler F."/>
            <person name="Barnett M.J."/>
            <person name="Becker A."/>
            <person name="Boistard P."/>
            <person name="Bothe G."/>
            <person name="Boutry M."/>
            <person name="Bowser L."/>
            <person name="Buhrmester J."/>
            <person name="Cadieu E."/>
            <person name="Capela D."/>
            <person name="Chain P."/>
            <person name="Cowie A."/>
            <person name="Davis R.W."/>
            <person name="Dreano S."/>
            <person name="Federspiel N.A."/>
            <person name="Fisher R.F."/>
            <person name="Gloux S."/>
            <person name="Godrie T."/>
            <person name="Goffeau A."/>
            <person name="Golding B."/>
            <person name="Gouzy J."/>
            <person name="Gurjal M."/>
            <person name="Hernandez-Lucas I."/>
            <person name="Hong A."/>
            <person name="Huizar L."/>
            <person name="Hyman R.W."/>
            <person name="Jones T."/>
            <person name="Kahn D."/>
            <person name="Kahn M.L."/>
            <person name="Kalman S."/>
            <person name="Keating D.H."/>
            <person name="Kiss E."/>
            <person name="Komp C."/>
            <person name="Lelaure V."/>
            <person name="Masuy D."/>
            <person name="Palm C."/>
            <person name="Peck M.C."/>
            <person name="Pohl T.M."/>
            <person name="Portetelle D."/>
            <person name="Purnelle B."/>
            <person name="Ramsperger U."/>
            <person name="Surzycki R."/>
            <person name="Thebault P."/>
            <person name="Vandenbol M."/>
            <person name="Vorhoelter F.J."/>
            <person name="Weidner S."/>
            <person name="Wells D.H."/>
            <person name="Wong K."/>
            <person name="Yeh K.-C."/>
            <person name="Batut J."/>
        </authorList>
    </citation>
    <scope>NUCLEOTIDE SEQUENCE [LARGE SCALE GENOMIC DNA]</scope>
    <source>
        <strain>1021</strain>
    </source>
</reference>